<dbReference type="EMBL" id="Z23079">
    <property type="protein sequence ID" value="CAA80620.1"/>
    <property type="status" value="ALT_INIT"/>
    <property type="molecule type" value="Genomic_DNA"/>
</dbReference>
<dbReference type="EMBL" id="AE001437">
    <property type="protein sequence ID" value="AAK79664.1"/>
    <property type="molecule type" value="Genomic_DNA"/>
</dbReference>
<dbReference type="PIR" id="E97109">
    <property type="entry name" value="E97109"/>
</dbReference>
<dbReference type="PIR" id="I40624">
    <property type="entry name" value="I40624"/>
</dbReference>
<dbReference type="RefSeq" id="NP_348324.1">
    <property type="nucleotide sequence ID" value="NC_003030.1"/>
</dbReference>
<dbReference type="RefSeq" id="WP_010965005.1">
    <property type="nucleotide sequence ID" value="NC_003030.1"/>
</dbReference>
<dbReference type="SMR" id="P33661"/>
<dbReference type="STRING" id="272562.CA_C1698"/>
<dbReference type="GeneID" id="44998193"/>
<dbReference type="KEGG" id="cac:CA_C1698"/>
<dbReference type="PATRIC" id="fig|272562.8.peg.1901"/>
<dbReference type="eggNOG" id="COG1327">
    <property type="taxonomic scope" value="Bacteria"/>
</dbReference>
<dbReference type="HOGENOM" id="CLU_108412_0_0_9"/>
<dbReference type="OrthoDB" id="9807461at2"/>
<dbReference type="Proteomes" id="UP000000814">
    <property type="component" value="Chromosome"/>
</dbReference>
<dbReference type="GO" id="GO:0005524">
    <property type="term" value="F:ATP binding"/>
    <property type="evidence" value="ECO:0007669"/>
    <property type="project" value="UniProtKB-KW"/>
</dbReference>
<dbReference type="GO" id="GO:0003677">
    <property type="term" value="F:DNA binding"/>
    <property type="evidence" value="ECO:0007669"/>
    <property type="project" value="UniProtKB-KW"/>
</dbReference>
<dbReference type="GO" id="GO:0008270">
    <property type="term" value="F:zinc ion binding"/>
    <property type="evidence" value="ECO:0007669"/>
    <property type="project" value="UniProtKB-UniRule"/>
</dbReference>
<dbReference type="GO" id="GO:0045892">
    <property type="term" value="P:negative regulation of DNA-templated transcription"/>
    <property type="evidence" value="ECO:0007669"/>
    <property type="project" value="UniProtKB-UniRule"/>
</dbReference>
<dbReference type="HAMAP" id="MF_00440">
    <property type="entry name" value="NrdR"/>
    <property type="match status" value="1"/>
</dbReference>
<dbReference type="InterPro" id="IPR005144">
    <property type="entry name" value="ATP-cone_dom"/>
</dbReference>
<dbReference type="InterPro" id="IPR055173">
    <property type="entry name" value="NrdR-like_N"/>
</dbReference>
<dbReference type="InterPro" id="IPR003796">
    <property type="entry name" value="RNR_NrdR-like"/>
</dbReference>
<dbReference type="NCBIfam" id="TIGR00244">
    <property type="entry name" value="transcriptional regulator NrdR"/>
    <property type="match status" value="1"/>
</dbReference>
<dbReference type="PANTHER" id="PTHR30455">
    <property type="entry name" value="TRANSCRIPTIONAL REPRESSOR NRDR"/>
    <property type="match status" value="1"/>
</dbReference>
<dbReference type="PANTHER" id="PTHR30455:SF2">
    <property type="entry name" value="TRANSCRIPTIONAL REPRESSOR NRDR"/>
    <property type="match status" value="1"/>
</dbReference>
<dbReference type="Pfam" id="PF03477">
    <property type="entry name" value="ATP-cone"/>
    <property type="match status" value="1"/>
</dbReference>
<dbReference type="Pfam" id="PF22811">
    <property type="entry name" value="Zn_ribbon_NrdR"/>
    <property type="match status" value="1"/>
</dbReference>
<dbReference type="PROSITE" id="PS51161">
    <property type="entry name" value="ATP_CONE"/>
    <property type="match status" value="1"/>
</dbReference>
<feature type="chain" id="PRO_0000182285" description="Transcriptional repressor NrdR">
    <location>
        <begin position="1"/>
        <end position="151"/>
    </location>
</feature>
<feature type="domain" description="ATP-cone" evidence="1">
    <location>
        <begin position="49"/>
        <end position="139"/>
    </location>
</feature>
<feature type="zinc finger region" evidence="1">
    <location>
        <begin position="3"/>
        <end position="34"/>
    </location>
</feature>
<gene>
    <name evidence="1" type="primary">nrdR</name>
    <name type="ordered locus">CA_C1698</name>
</gene>
<reference key="1">
    <citation type="journal article" date="1994" name="J. Bacteriol.">
        <title>Sporulation and primary sigma factor homologous genes in Clostridium acetobutylicum.</title>
        <authorList>
            <person name="Sauer U."/>
            <person name="Treuner A."/>
            <person name="Buchholz M."/>
            <person name="Santangelo J.D."/>
            <person name="Durre P."/>
        </authorList>
    </citation>
    <scope>NUCLEOTIDE SEQUENCE [GENOMIC DNA]</scope>
    <source>
        <strain>ATCC 824 / DSM 792 / JCM 1419 / IAM 19013 / LMG 5710 / NBRC 13948 / NRRL B-527 / VKM B-1787 / 2291 / W</strain>
    </source>
</reference>
<reference key="2">
    <citation type="journal article" date="2001" name="J. Bacteriol.">
        <title>Genome sequence and comparative analysis of the solvent-producing bacterium Clostridium acetobutylicum.</title>
        <authorList>
            <person name="Noelling J."/>
            <person name="Breton G."/>
            <person name="Omelchenko M.V."/>
            <person name="Makarova K.S."/>
            <person name="Zeng Q."/>
            <person name="Gibson R."/>
            <person name="Lee H.M."/>
            <person name="Dubois J."/>
            <person name="Qiu D."/>
            <person name="Hitti J."/>
            <person name="Wolf Y.I."/>
            <person name="Tatusov R.L."/>
            <person name="Sabathe F."/>
            <person name="Doucette-Stamm L.A."/>
            <person name="Soucaille P."/>
            <person name="Daly M.J."/>
            <person name="Bennett G.N."/>
            <person name="Koonin E.V."/>
            <person name="Smith D.R."/>
        </authorList>
    </citation>
    <scope>NUCLEOTIDE SEQUENCE [LARGE SCALE GENOMIC DNA]</scope>
    <source>
        <strain>ATCC 824 / DSM 792 / JCM 1419 / IAM 19013 / LMG 5710 / NBRC 13948 / NRRL B-527 / VKM B-1787 / 2291 / W</strain>
    </source>
</reference>
<name>NRDR_CLOAB</name>
<keyword id="KW-0067">ATP-binding</keyword>
<keyword id="KW-0238">DNA-binding</keyword>
<keyword id="KW-0479">Metal-binding</keyword>
<keyword id="KW-0547">Nucleotide-binding</keyword>
<keyword id="KW-1185">Reference proteome</keyword>
<keyword id="KW-0678">Repressor</keyword>
<keyword id="KW-0804">Transcription</keyword>
<keyword id="KW-0805">Transcription regulation</keyword>
<keyword id="KW-0862">Zinc</keyword>
<keyword id="KW-0863">Zinc-finger</keyword>
<proteinExistence type="inferred from homology"/>
<comment type="function">
    <text evidence="1">Negatively regulates transcription of bacterial ribonucleotide reductase nrd genes and operons by binding to NrdR-boxes.</text>
</comment>
<comment type="cofactor">
    <cofactor evidence="1">
        <name>Zn(2+)</name>
        <dbReference type="ChEBI" id="CHEBI:29105"/>
    </cofactor>
    <text evidence="1">Binds 1 zinc ion.</text>
</comment>
<comment type="similarity">
    <text evidence="1">Belongs to the NrdR family.</text>
</comment>
<comment type="sequence caution" evidence="2">
    <conflict type="erroneous initiation">
        <sequence resource="EMBL-CDS" id="CAA80620"/>
    </conflict>
</comment>
<protein>
    <recommendedName>
        <fullName evidence="1">Transcriptional repressor NrdR</fullName>
    </recommendedName>
</protein>
<sequence>MKCPFCGYSESKVVDSRSTEDNMAIRRRRECLECSKRYTTYEKVEDIPILVIKKDSSREFFDKSKVINGLIKSCEKRPVSRQQIEDIASDVEKSISNQMVTEVKSDAIGEMVMEKLKEIDEIAYVRFASVYRQFKDINTFMEEILNLVNKK</sequence>
<evidence type="ECO:0000255" key="1">
    <source>
        <dbReference type="HAMAP-Rule" id="MF_00440"/>
    </source>
</evidence>
<evidence type="ECO:0000305" key="2"/>
<organism>
    <name type="scientific">Clostridium acetobutylicum (strain ATCC 824 / DSM 792 / JCM 1419 / IAM 19013 / LMG 5710 / NBRC 13948 / NRRL B-527 / VKM B-1787 / 2291 / W)</name>
    <dbReference type="NCBI Taxonomy" id="272562"/>
    <lineage>
        <taxon>Bacteria</taxon>
        <taxon>Bacillati</taxon>
        <taxon>Bacillota</taxon>
        <taxon>Clostridia</taxon>
        <taxon>Eubacteriales</taxon>
        <taxon>Clostridiaceae</taxon>
        <taxon>Clostridium</taxon>
    </lineage>
</organism>
<accession>P33661</accession>